<reference key="1">
    <citation type="journal article" date="2007" name="PLoS ONE">
        <title>A glimpse of streptococcal toxic shock syndrome from comparative genomics of S. suis 2 Chinese isolates.</title>
        <authorList>
            <person name="Chen C."/>
            <person name="Tang J."/>
            <person name="Dong W."/>
            <person name="Wang C."/>
            <person name="Feng Y."/>
            <person name="Wang J."/>
            <person name="Zheng F."/>
            <person name="Pan X."/>
            <person name="Liu D."/>
            <person name="Li M."/>
            <person name="Song Y."/>
            <person name="Zhu X."/>
            <person name="Sun H."/>
            <person name="Feng T."/>
            <person name="Guo Z."/>
            <person name="Ju A."/>
            <person name="Ge J."/>
            <person name="Dong Y."/>
            <person name="Sun W."/>
            <person name="Jiang Y."/>
            <person name="Wang J."/>
            <person name="Yan J."/>
            <person name="Yang H."/>
            <person name="Wang X."/>
            <person name="Gao G.F."/>
            <person name="Yang R."/>
            <person name="Wang J."/>
            <person name="Yu J."/>
        </authorList>
    </citation>
    <scope>NUCLEOTIDE SEQUENCE [LARGE SCALE GENOMIC DNA]</scope>
    <source>
        <strain>05ZYH33</strain>
    </source>
</reference>
<protein>
    <recommendedName>
        <fullName evidence="1">Protein SprT-like</fullName>
    </recommendedName>
</protein>
<feature type="chain" id="PRO_1000046521" description="Protein SprT-like">
    <location>
        <begin position="1"/>
        <end position="144"/>
    </location>
</feature>
<feature type="domain" description="SprT-like" evidence="1">
    <location>
        <begin position="4"/>
        <end position="143"/>
    </location>
</feature>
<feature type="active site" evidence="1">
    <location>
        <position position="65"/>
    </location>
</feature>
<feature type="binding site" evidence="1">
    <location>
        <position position="64"/>
    </location>
    <ligand>
        <name>Zn(2+)</name>
        <dbReference type="ChEBI" id="CHEBI:29105"/>
    </ligand>
</feature>
<feature type="binding site" evidence="1">
    <location>
        <position position="68"/>
    </location>
    <ligand>
        <name>Zn(2+)</name>
        <dbReference type="ChEBI" id="CHEBI:29105"/>
    </ligand>
</feature>
<dbReference type="EMBL" id="CP000407">
    <property type="protein sequence ID" value="ABP90577.1"/>
    <property type="molecule type" value="Genomic_DNA"/>
</dbReference>
<dbReference type="STRING" id="391295.SSU05_1611"/>
<dbReference type="KEGG" id="ssu:SSU05_1611"/>
<dbReference type="eggNOG" id="COG3091">
    <property type="taxonomic scope" value="Bacteria"/>
</dbReference>
<dbReference type="HOGENOM" id="CLU_123820_0_0_9"/>
<dbReference type="BioCyc" id="SSUI391295:GHI8-1665-MONOMER"/>
<dbReference type="GO" id="GO:0005737">
    <property type="term" value="C:cytoplasm"/>
    <property type="evidence" value="ECO:0007669"/>
    <property type="project" value="UniProtKB-SubCell"/>
</dbReference>
<dbReference type="GO" id="GO:0008270">
    <property type="term" value="F:zinc ion binding"/>
    <property type="evidence" value="ECO:0007669"/>
    <property type="project" value="UniProtKB-UniRule"/>
</dbReference>
<dbReference type="GO" id="GO:0006950">
    <property type="term" value="P:response to stress"/>
    <property type="evidence" value="ECO:0007669"/>
    <property type="project" value="UniProtKB-ARBA"/>
</dbReference>
<dbReference type="HAMAP" id="MF_00745">
    <property type="entry name" value="SprT_like"/>
    <property type="match status" value="1"/>
</dbReference>
<dbReference type="InterPro" id="IPR006640">
    <property type="entry name" value="SprT-like_domain"/>
</dbReference>
<dbReference type="InterPro" id="IPR035240">
    <property type="entry name" value="SprT_Zn_ribbon"/>
</dbReference>
<dbReference type="InterPro" id="IPR023524">
    <property type="entry name" value="Uncharacterised_SprT-like"/>
</dbReference>
<dbReference type="NCBIfam" id="NF003339">
    <property type="entry name" value="PRK04351.1"/>
    <property type="match status" value="1"/>
</dbReference>
<dbReference type="Pfam" id="PF10263">
    <property type="entry name" value="SprT-like"/>
    <property type="match status" value="1"/>
</dbReference>
<dbReference type="Pfam" id="PF17283">
    <property type="entry name" value="Zn_ribbon_SprT"/>
    <property type="match status" value="1"/>
</dbReference>
<dbReference type="SMART" id="SM00731">
    <property type="entry name" value="SprT"/>
    <property type="match status" value="1"/>
</dbReference>
<keyword id="KW-0963">Cytoplasm</keyword>
<keyword id="KW-0479">Metal-binding</keyword>
<keyword id="KW-0862">Zinc</keyword>
<evidence type="ECO:0000255" key="1">
    <source>
        <dbReference type="HAMAP-Rule" id="MF_00745"/>
    </source>
</evidence>
<sequence>MDLNKYVQEVSLQDFGKEFRHVAIWNRRLRSTGGRFFPRDGHLDFNPKHLEEQGLEVFRKIVRHELCHYHLYFEKKGYRHGDRDFKELLAAVDGLRYAPQLEQATKPSLIYCCQSCGQVYQRKRRIDLKKYRCGKCRGKLTLKE</sequence>
<name>SPRTL_STRSY</name>
<proteinExistence type="inferred from homology"/>
<comment type="cofactor">
    <cofactor evidence="1">
        <name>Zn(2+)</name>
        <dbReference type="ChEBI" id="CHEBI:29105"/>
    </cofactor>
    <text evidence="1">Binds 1 zinc ion.</text>
</comment>
<comment type="subcellular location">
    <subcellularLocation>
        <location evidence="1">Cytoplasm</location>
    </subcellularLocation>
</comment>
<comment type="similarity">
    <text evidence="1">Belongs to the SprT family.</text>
</comment>
<organism>
    <name type="scientific">Streptococcus suis (strain 05ZYH33)</name>
    <dbReference type="NCBI Taxonomy" id="391295"/>
    <lineage>
        <taxon>Bacteria</taxon>
        <taxon>Bacillati</taxon>
        <taxon>Bacillota</taxon>
        <taxon>Bacilli</taxon>
        <taxon>Lactobacillales</taxon>
        <taxon>Streptococcaceae</taxon>
        <taxon>Streptococcus</taxon>
    </lineage>
</organism>
<gene>
    <name type="ordered locus">SSU05_1611</name>
</gene>
<accession>A4VWT8</accession>